<sequence length="339" mass="38229">MKVESVTKEETKKPERKIKLAIAKPEDYSNKNVILEKEEELICPVCGSKNIIKDYERAEIVCEMCGCVLQQNLFDVGPEWRAFDHEQRVKRSRVGAPMTYTIHDKGLSTVIDWRNKDSYGKDISADKRAQLYRLRKWQRRIRVSDASERNLAFALSELDRIASKLGLPRNVRENAAVLYRGAVEKGLIRGRSIEGVAAAALYAACRRCKVPRTLDEIAEVSRVDRKEIGRTYRFISRELNIRLAPTNPVDYVPRFASELKLPGEVESKAISILQKAGEKGLTSGRGPTGVAAAAIYIASVLQGTRRTQREVADVAGVTEVTIRNRYKELTEHLDIDVTL</sequence>
<accession>A6VI28</accession>
<protein>
    <recommendedName>
        <fullName evidence="1">Transcription initiation factor IIB</fullName>
        <shortName evidence="1">TFIIB</shortName>
    </recommendedName>
</protein>
<proteinExistence type="inferred from homology"/>
<reference key="1">
    <citation type="submission" date="2007-06" db="EMBL/GenBank/DDBJ databases">
        <title>Complete sequence of Methanococcus maripaludis C7.</title>
        <authorList>
            <consortium name="US DOE Joint Genome Institute"/>
            <person name="Copeland A."/>
            <person name="Lucas S."/>
            <person name="Lapidus A."/>
            <person name="Barry K."/>
            <person name="Glavina del Rio T."/>
            <person name="Dalin E."/>
            <person name="Tice H."/>
            <person name="Pitluck S."/>
            <person name="Clum A."/>
            <person name="Schmutz J."/>
            <person name="Larimer F."/>
            <person name="Land M."/>
            <person name="Hauser L."/>
            <person name="Kyrpides N."/>
            <person name="Anderson I."/>
            <person name="Sieprawska-Lupa M."/>
            <person name="Whitman W.B."/>
            <person name="Richardson P."/>
        </authorList>
    </citation>
    <scope>NUCLEOTIDE SEQUENCE [LARGE SCALE GENOMIC DNA]</scope>
    <source>
        <strain>C7 / ATCC BAA-1331</strain>
    </source>
</reference>
<gene>
    <name evidence="1" type="primary">tfb</name>
    <name type="ordered locus">MmarC7_1038</name>
</gene>
<name>TF2B_METM7</name>
<evidence type="ECO:0000255" key="1">
    <source>
        <dbReference type="HAMAP-Rule" id="MF_00383"/>
    </source>
</evidence>
<evidence type="ECO:0000255" key="2">
    <source>
        <dbReference type="PROSITE-ProRule" id="PRU00469"/>
    </source>
</evidence>
<feature type="chain" id="PRO_1000080109" description="Transcription initiation factor IIB">
    <location>
        <begin position="1"/>
        <end position="339"/>
    </location>
</feature>
<feature type="repeat" description="1">
    <location>
        <begin position="156"/>
        <end position="239"/>
    </location>
</feature>
<feature type="repeat" description="2">
    <location>
        <begin position="250"/>
        <end position="331"/>
    </location>
</feature>
<feature type="zinc finger region" description="TFIIB-type" evidence="2">
    <location>
        <begin position="39"/>
        <end position="70"/>
    </location>
</feature>
<feature type="binding site" evidence="2">
    <location>
        <position position="43"/>
    </location>
    <ligand>
        <name>Zn(2+)</name>
        <dbReference type="ChEBI" id="CHEBI:29105"/>
    </ligand>
</feature>
<feature type="binding site" evidence="2">
    <location>
        <position position="46"/>
    </location>
    <ligand>
        <name>Zn(2+)</name>
        <dbReference type="ChEBI" id="CHEBI:29105"/>
    </ligand>
</feature>
<feature type="binding site" evidence="2">
    <location>
        <position position="62"/>
    </location>
    <ligand>
        <name>Zn(2+)</name>
        <dbReference type="ChEBI" id="CHEBI:29105"/>
    </ligand>
</feature>
<feature type="binding site" evidence="2">
    <location>
        <position position="65"/>
    </location>
    <ligand>
        <name>Zn(2+)</name>
        <dbReference type="ChEBI" id="CHEBI:29105"/>
    </ligand>
</feature>
<keyword id="KW-0479">Metal-binding</keyword>
<keyword id="KW-0677">Repeat</keyword>
<keyword id="KW-0804">Transcription</keyword>
<keyword id="KW-0805">Transcription regulation</keyword>
<keyword id="KW-0862">Zinc</keyword>
<keyword id="KW-0863">Zinc-finger</keyword>
<comment type="function">
    <text evidence="1">Stabilizes TBP binding to an archaeal box-A promoter. Also responsible for recruiting RNA polymerase II to the pre-initiation complex (DNA-TBP-TFIIB).</text>
</comment>
<comment type="similarity">
    <text evidence="1">Belongs to the TFIIB family.</text>
</comment>
<dbReference type="EMBL" id="CP000745">
    <property type="protein sequence ID" value="ABR66104.1"/>
    <property type="molecule type" value="Genomic_DNA"/>
</dbReference>
<dbReference type="SMR" id="A6VI28"/>
<dbReference type="STRING" id="426368.MmarC7_1038"/>
<dbReference type="KEGG" id="mmz:MmarC7_1038"/>
<dbReference type="eggNOG" id="arCOG01981">
    <property type="taxonomic scope" value="Archaea"/>
</dbReference>
<dbReference type="HOGENOM" id="CLU_043736_0_1_2"/>
<dbReference type="OrthoDB" id="7429at2157"/>
<dbReference type="GO" id="GO:0097550">
    <property type="term" value="C:transcription preinitiation complex"/>
    <property type="evidence" value="ECO:0007669"/>
    <property type="project" value="TreeGrafter"/>
</dbReference>
<dbReference type="GO" id="GO:0003700">
    <property type="term" value="F:DNA-binding transcription factor activity"/>
    <property type="evidence" value="ECO:0007669"/>
    <property type="project" value="UniProtKB-UniRule"/>
</dbReference>
<dbReference type="GO" id="GO:0017025">
    <property type="term" value="F:TBP-class protein binding"/>
    <property type="evidence" value="ECO:0007669"/>
    <property type="project" value="InterPro"/>
</dbReference>
<dbReference type="GO" id="GO:0008270">
    <property type="term" value="F:zinc ion binding"/>
    <property type="evidence" value="ECO:0007669"/>
    <property type="project" value="UniProtKB-UniRule"/>
</dbReference>
<dbReference type="GO" id="GO:0070897">
    <property type="term" value="P:transcription preinitiation complex assembly"/>
    <property type="evidence" value="ECO:0007669"/>
    <property type="project" value="InterPro"/>
</dbReference>
<dbReference type="CDD" id="cd20549">
    <property type="entry name" value="CYCLIN_TFIIB_archaea_like_rpt1"/>
    <property type="match status" value="1"/>
</dbReference>
<dbReference type="CDD" id="cd20550">
    <property type="entry name" value="CYCLIN_TFIIB_archaea_like_rpt2"/>
    <property type="match status" value="1"/>
</dbReference>
<dbReference type="FunFam" id="1.10.472.10:FF:000023">
    <property type="entry name" value="Transcription initiation factor IIB"/>
    <property type="match status" value="1"/>
</dbReference>
<dbReference type="FunFam" id="1.10.472.170:FF:000001">
    <property type="entry name" value="Transcription initiation factor IIB"/>
    <property type="match status" value="1"/>
</dbReference>
<dbReference type="Gene3D" id="1.10.472.170">
    <property type="match status" value="1"/>
</dbReference>
<dbReference type="Gene3D" id="1.10.472.10">
    <property type="entry name" value="Cyclin-like"/>
    <property type="match status" value="1"/>
</dbReference>
<dbReference type="HAMAP" id="MF_00383">
    <property type="entry name" value="TF2B_arch"/>
    <property type="match status" value="1"/>
</dbReference>
<dbReference type="InterPro" id="IPR013763">
    <property type="entry name" value="Cyclin-like_dom"/>
</dbReference>
<dbReference type="InterPro" id="IPR036915">
    <property type="entry name" value="Cyclin-like_sf"/>
</dbReference>
<dbReference type="InterPro" id="IPR000812">
    <property type="entry name" value="TFIIB"/>
</dbReference>
<dbReference type="InterPro" id="IPR023484">
    <property type="entry name" value="TFIIB_arc"/>
</dbReference>
<dbReference type="InterPro" id="IPR023486">
    <property type="entry name" value="TFIIB_CS"/>
</dbReference>
<dbReference type="InterPro" id="IPR013150">
    <property type="entry name" value="TFIIB_cyclin"/>
</dbReference>
<dbReference type="InterPro" id="IPR013137">
    <property type="entry name" value="Znf_TFIIB"/>
</dbReference>
<dbReference type="NCBIfam" id="NF001658">
    <property type="entry name" value="PRK00423.1"/>
    <property type="match status" value="1"/>
</dbReference>
<dbReference type="PANTHER" id="PTHR11618:SF13">
    <property type="entry name" value="TRANSCRIPTION INITIATION FACTOR IIB"/>
    <property type="match status" value="1"/>
</dbReference>
<dbReference type="PANTHER" id="PTHR11618">
    <property type="entry name" value="TRANSCRIPTION INITIATION FACTOR IIB-RELATED"/>
    <property type="match status" value="1"/>
</dbReference>
<dbReference type="Pfam" id="PF00382">
    <property type="entry name" value="TFIIB"/>
    <property type="match status" value="2"/>
</dbReference>
<dbReference type="Pfam" id="PF08271">
    <property type="entry name" value="Zn_Ribbon_TF"/>
    <property type="match status" value="1"/>
</dbReference>
<dbReference type="PRINTS" id="PR00685">
    <property type="entry name" value="TIFACTORIIB"/>
</dbReference>
<dbReference type="SMART" id="SM00385">
    <property type="entry name" value="CYCLIN"/>
    <property type="match status" value="2"/>
</dbReference>
<dbReference type="SUPFAM" id="SSF47954">
    <property type="entry name" value="Cyclin-like"/>
    <property type="match status" value="2"/>
</dbReference>
<dbReference type="SUPFAM" id="SSF57783">
    <property type="entry name" value="Zinc beta-ribbon"/>
    <property type="match status" value="1"/>
</dbReference>
<dbReference type="PROSITE" id="PS00782">
    <property type="entry name" value="TFIIB"/>
    <property type="match status" value="2"/>
</dbReference>
<dbReference type="PROSITE" id="PS51134">
    <property type="entry name" value="ZF_TFIIB"/>
    <property type="match status" value="1"/>
</dbReference>
<organism>
    <name type="scientific">Methanococcus maripaludis (strain C7 / ATCC BAA-1331)</name>
    <dbReference type="NCBI Taxonomy" id="426368"/>
    <lineage>
        <taxon>Archaea</taxon>
        <taxon>Methanobacteriati</taxon>
        <taxon>Methanobacteriota</taxon>
        <taxon>Methanomada group</taxon>
        <taxon>Methanococci</taxon>
        <taxon>Methanococcales</taxon>
        <taxon>Methanococcaceae</taxon>
        <taxon>Methanococcus</taxon>
    </lineage>
</organism>